<dbReference type="EC" id="2.4.1.227" evidence="1"/>
<dbReference type="EMBL" id="CP000860">
    <property type="protein sequence ID" value="ACA59943.1"/>
    <property type="molecule type" value="Genomic_DNA"/>
</dbReference>
<dbReference type="RefSeq" id="WP_012302528.1">
    <property type="nucleotide sequence ID" value="NC_010424.1"/>
</dbReference>
<dbReference type="SMR" id="B1I4C4"/>
<dbReference type="STRING" id="477974.Daud_1436"/>
<dbReference type="CAZy" id="GT28">
    <property type="family name" value="Glycosyltransferase Family 28"/>
</dbReference>
<dbReference type="KEGG" id="dau:Daud_1436"/>
<dbReference type="eggNOG" id="COG0707">
    <property type="taxonomic scope" value="Bacteria"/>
</dbReference>
<dbReference type="HOGENOM" id="CLU_037404_0_1_9"/>
<dbReference type="OrthoDB" id="9808936at2"/>
<dbReference type="UniPathway" id="UPA00219"/>
<dbReference type="Proteomes" id="UP000008544">
    <property type="component" value="Chromosome"/>
</dbReference>
<dbReference type="GO" id="GO:0005886">
    <property type="term" value="C:plasma membrane"/>
    <property type="evidence" value="ECO:0007669"/>
    <property type="project" value="UniProtKB-SubCell"/>
</dbReference>
<dbReference type="GO" id="GO:0051991">
    <property type="term" value="F:UDP-N-acetyl-D-glucosamine:N-acetylmuramoyl-L-alanyl-D-glutamyl-meso-2,6-diaminopimelyl-D-alanyl-D-alanine-diphosphoundecaprenol 4-beta-N-acetylglucosaminlytransferase activity"/>
    <property type="evidence" value="ECO:0007669"/>
    <property type="project" value="RHEA"/>
</dbReference>
<dbReference type="GO" id="GO:0050511">
    <property type="term" value="F:undecaprenyldiphospho-muramoylpentapeptide beta-N-acetylglucosaminyltransferase activity"/>
    <property type="evidence" value="ECO:0007669"/>
    <property type="project" value="UniProtKB-UniRule"/>
</dbReference>
<dbReference type="GO" id="GO:0005975">
    <property type="term" value="P:carbohydrate metabolic process"/>
    <property type="evidence" value="ECO:0007669"/>
    <property type="project" value="InterPro"/>
</dbReference>
<dbReference type="GO" id="GO:0051301">
    <property type="term" value="P:cell division"/>
    <property type="evidence" value="ECO:0007669"/>
    <property type="project" value="UniProtKB-KW"/>
</dbReference>
<dbReference type="GO" id="GO:0071555">
    <property type="term" value="P:cell wall organization"/>
    <property type="evidence" value="ECO:0007669"/>
    <property type="project" value="UniProtKB-KW"/>
</dbReference>
<dbReference type="GO" id="GO:0030259">
    <property type="term" value="P:lipid glycosylation"/>
    <property type="evidence" value="ECO:0007669"/>
    <property type="project" value="UniProtKB-UniRule"/>
</dbReference>
<dbReference type="GO" id="GO:0009252">
    <property type="term" value="P:peptidoglycan biosynthetic process"/>
    <property type="evidence" value="ECO:0007669"/>
    <property type="project" value="UniProtKB-UniRule"/>
</dbReference>
<dbReference type="GO" id="GO:0008360">
    <property type="term" value="P:regulation of cell shape"/>
    <property type="evidence" value="ECO:0007669"/>
    <property type="project" value="UniProtKB-KW"/>
</dbReference>
<dbReference type="CDD" id="cd03785">
    <property type="entry name" value="GT28_MurG"/>
    <property type="match status" value="1"/>
</dbReference>
<dbReference type="Gene3D" id="3.40.50.2000">
    <property type="entry name" value="Glycogen Phosphorylase B"/>
    <property type="match status" value="2"/>
</dbReference>
<dbReference type="HAMAP" id="MF_00033">
    <property type="entry name" value="MurG"/>
    <property type="match status" value="1"/>
</dbReference>
<dbReference type="InterPro" id="IPR006009">
    <property type="entry name" value="GlcNAc_MurG"/>
</dbReference>
<dbReference type="InterPro" id="IPR007235">
    <property type="entry name" value="Glyco_trans_28_C"/>
</dbReference>
<dbReference type="InterPro" id="IPR004276">
    <property type="entry name" value="GlycoTrans_28_N"/>
</dbReference>
<dbReference type="NCBIfam" id="TIGR01133">
    <property type="entry name" value="murG"/>
    <property type="match status" value="1"/>
</dbReference>
<dbReference type="PANTHER" id="PTHR21015:SF22">
    <property type="entry name" value="GLYCOSYLTRANSFERASE"/>
    <property type="match status" value="1"/>
</dbReference>
<dbReference type="PANTHER" id="PTHR21015">
    <property type="entry name" value="UDP-N-ACETYLGLUCOSAMINE--N-ACETYLMURAMYL-(PENTAPEPTIDE) PYROPHOSPHORYL-UNDECAPRENOL N-ACETYLGLUCOSAMINE TRANSFERASE 1"/>
    <property type="match status" value="1"/>
</dbReference>
<dbReference type="Pfam" id="PF04101">
    <property type="entry name" value="Glyco_tran_28_C"/>
    <property type="match status" value="1"/>
</dbReference>
<dbReference type="Pfam" id="PF03033">
    <property type="entry name" value="Glyco_transf_28"/>
    <property type="match status" value="1"/>
</dbReference>
<dbReference type="SUPFAM" id="SSF53756">
    <property type="entry name" value="UDP-Glycosyltransferase/glycogen phosphorylase"/>
    <property type="match status" value="1"/>
</dbReference>
<accession>B1I4C4</accession>
<reference key="1">
    <citation type="submission" date="2007-10" db="EMBL/GenBank/DDBJ databases">
        <title>Complete sequence of chromosome of Desulforudis audaxviator MP104C.</title>
        <authorList>
            <person name="Copeland A."/>
            <person name="Lucas S."/>
            <person name="Lapidus A."/>
            <person name="Barry K."/>
            <person name="Glavina del Rio T."/>
            <person name="Dalin E."/>
            <person name="Tice H."/>
            <person name="Bruce D."/>
            <person name="Pitluck S."/>
            <person name="Lowry S.R."/>
            <person name="Larimer F."/>
            <person name="Land M.L."/>
            <person name="Hauser L."/>
            <person name="Kyrpides N."/>
            <person name="Ivanova N.N."/>
            <person name="Richardson P."/>
        </authorList>
    </citation>
    <scope>NUCLEOTIDE SEQUENCE [LARGE SCALE GENOMIC DNA]</scope>
    <source>
        <strain>MP104C</strain>
    </source>
</reference>
<comment type="function">
    <text evidence="1">Cell wall formation. Catalyzes the transfer of a GlcNAc subunit on undecaprenyl-pyrophosphoryl-MurNAc-pentapeptide (lipid intermediate I) to form undecaprenyl-pyrophosphoryl-MurNAc-(pentapeptide)GlcNAc (lipid intermediate II).</text>
</comment>
<comment type="catalytic activity">
    <reaction evidence="1">
        <text>di-trans,octa-cis-undecaprenyl diphospho-N-acetyl-alpha-D-muramoyl-L-alanyl-D-glutamyl-meso-2,6-diaminopimeloyl-D-alanyl-D-alanine + UDP-N-acetyl-alpha-D-glucosamine = di-trans,octa-cis-undecaprenyl diphospho-[N-acetyl-alpha-D-glucosaminyl-(1-&gt;4)]-N-acetyl-alpha-D-muramoyl-L-alanyl-D-glutamyl-meso-2,6-diaminopimeloyl-D-alanyl-D-alanine + UDP + H(+)</text>
        <dbReference type="Rhea" id="RHEA:31227"/>
        <dbReference type="ChEBI" id="CHEBI:15378"/>
        <dbReference type="ChEBI" id="CHEBI:57705"/>
        <dbReference type="ChEBI" id="CHEBI:58223"/>
        <dbReference type="ChEBI" id="CHEBI:61387"/>
        <dbReference type="ChEBI" id="CHEBI:61388"/>
        <dbReference type="EC" id="2.4.1.227"/>
    </reaction>
</comment>
<comment type="pathway">
    <text evidence="1">Cell wall biogenesis; peptidoglycan biosynthesis.</text>
</comment>
<comment type="subcellular location">
    <subcellularLocation>
        <location evidence="1">Cell membrane</location>
        <topology evidence="1">Peripheral membrane protein</topology>
        <orientation evidence="1">Cytoplasmic side</orientation>
    </subcellularLocation>
</comment>
<comment type="similarity">
    <text evidence="1">Belongs to the glycosyltransferase 28 family. MurG subfamily.</text>
</comment>
<organism>
    <name type="scientific">Desulforudis audaxviator (strain MP104C)</name>
    <dbReference type="NCBI Taxonomy" id="477974"/>
    <lineage>
        <taxon>Bacteria</taxon>
        <taxon>Bacillati</taxon>
        <taxon>Bacillota</taxon>
        <taxon>Clostridia</taxon>
        <taxon>Thermoanaerobacterales</taxon>
        <taxon>Candidatus Desulforudaceae</taxon>
        <taxon>Candidatus Desulforudis</taxon>
    </lineage>
</organism>
<keyword id="KW-0131">Cell cycle</keyword>
<keyword id="KW-0132">Cell division</keyword>
<keyword id="KW-1003">Cell membrane</keyword>
<keyword id="KW-0133">Cell shape</keyword>
<keyword id="KW-0961">Cell wall biogenesis/degradation</keyword>
<keyword id="KW-0328">Glycosyltransferase</keyword>
<keyword id="KW-0472">Membrane</keyword>
<keyword id="KW-0573">Peptidoglycan synthesis</keyword>
<keyword id="KW-1185">Reference proteome</keyword>
<keyword id="KW-0808">Transferase</keyword>
<protein>
    <recommendedName>
        <fullName evidence="1">UDP-N-acetylglucosamine--N-acetylmuramyl-(pentapeptide) pyrophosphoryl-undecaprenol N-acetylglucosamine transferase</fullName>
        <ecNumber evidence="1">2.4.1.227</ecNumber>
    </recommendedName>
    <alternativeName>
        <fullName evidence="1">Undecaprenyl-PP-MurNAc-pentapeptide-UDPGlcNAc GlcNAc transferase</fullName>
    </alternativeName>
</protein>
<sequence>MRVIIAGGGTGGHIYPALAIAEGIKRRHPDADLLYVGTSRGLETEIVPRTGLPFHAIPAAGLKRGLSPTNLAAVLRAGRGLGASLSLMRRFRPQVVVGTGGYVCGPVVLAAALRGIKTLIHEQNALPGLTNRMLSRYASRTAVTFVEAAGHFPARARIILTGLPVRPEILNTRREQARRHLGIPDHAFVLLSFGGSRGARSLNQAMIPVVQAFREHPGVRLFHATGTAGYDEFAPLLKGTGSTAKAPGNIVVAPYFHEIAALLGAADLVICRSGASTIAELTALGLPSILVPYPFATGNHQEYNARALSERGAAVLILDRELTGQGLLAAVAALWNDPRKLAAMRQASKALGKPRALDSILDIIEKLAGKGTR</sequence>
<feature type="chain" id="PRO_1000090426" description="UDP-N-acetylglucosamine--N-acetylmuramyl-(pentapeptide) pyrophosphoryl-undecaprenol N-acetylglucosamine transferase">
    <location>
        <begin position="1"/>
        <end position="373"/>
    </location>
</feature>
<feature type="binding site" evidence="1">
    <location>
        <begin position="10"/>
        <end position="12"/>
    </location>
    <ligand>
        <name>UDP-N-acetyl-alpha-D-glucosamine</name>
        <dbReference type="ChEBI" id="CHEBI:57705"/>
    </ligand>
</feature>
<feature type="binding site" evidence="1">
    <location>
        <position position="124"/>
    </location>
    <ligand>
        <name>UDP-N-acetyl-alpha-D-glucosamine</name>
        <dbReference type="ChEBI" id="CHEBI:57705"/>
    </ligand>
</feature>
<feature type="binding site" evidence="1">
    <location>
        <position position="166"/>
    </location>
    <ligand>
        <name>UDP-N-acetyl-alpha-D-glucosamine</name>
        <dbReference type="ChEBI" id="CHEBI:57705"/>
    </ligand>
</feature>
<feature type="binding site" evidence="1">
    <location>
        <position position="196"/>
    </location>
    <ligand>
        <name>UDP-N-acetyl-alpha-D-glucosamine</name>
        <dbReference type="ChEBI" id="CHEBI:57705"/>
    </ligand>
</feature>
<feature type="binding site" evidence="1">
    <location>
        <position position="301"/>
    </location>
    <ligand>
        <name>UDP-N-acetyl-alpha-D-glucosamine</name>
        <dbReference type="ChEBI" id="CHEBI:57705"/>
    </ligand>
</feature>
<evidence type="ECO:0000255" key="1">
    <source>
        <dbReference type="HAMAP-Rule" id="MF_00033"/>
    </source>
</evidence>
<proteinExistence type="inferred from homology"/>
<gene>
    <name evidence="1" type="primary">murG</name>
    <name type="ordered locus">Daud_1436</name>
</gene>
<name>MURG_DESAP</name>